<name>CH10_SHEDO</name>
<reference key="1">
    <citation type="submission" date="2006-03" db="EMBL/GenBank/DDBJ databases">
        <title>Complete sequence of Shewanella denitrificans OS217.</title>
        <authorList>
            <consortium name="US DOE Joint Genome Institute"/>
            <person name="Copeland A."/>
            <person name="Lucas S."/>
            <person name="Lapidus A."/>
            <person name="Barry K."/>
            <person name="Detter J.C."/>
            <person name="Glavina del Rio T."/>
            <person name="Hammon N."/>
            <person name="Israni S."/>
            <person name="Dalin E."/>
            <person name="Tice H."/>
            <person name="Pitluck S."/>
            <person name="Brettin T."/>
            <person name="Bruce D."/>
            <person name="Han C."/>
            <person name="Tapia R."/>
            <person name="Gilna P."/>
            <person name="Kiss H."/>
            <person name="Schmutz J."/>
            <person name="Larimer F."/>
            <person name="Land M."/>
            <person name="Hauser L."/>
            <person name="Kyrpides N."/>
            <person name="Lykidis A."/>
            <person name="Richardson P."/>
        </authorList>
    </citation>
    <scope>NUCLEOTIDE SEQUENCE [LARGE SCALE GENOMIC DNA]</scope>
    <source>
        <strain>OS217 / ATCC BAA-1090 / DSM 15013</strain>
    </source>
</reference>
<sequence>MNIRPLHDRVIVKRLEVESKSAGGIVLTGSAAEKSTRGEILAVGNGRLLENGTVKPLDVKVGDVVIFNEGYGVKKEKIDGEEVLILSEADLMAVVG</sequence>
<gene>
    <name evidence="1" type="primary">groES</name>
    <name evidence="1" type="synonym">groS</name>
    <name type="ordered locus">Sden_0421</name>
</gene>
<proteinExistence type="inferred from homology"/>
<comment type="function">
    <text evidence="1">Together with the chaperonin GroEL, plays an essential role in assisting protein folding. The GroEL-GroES system forms a nano-cage that allows encapsulation of the non-native substrate proteins and provides a physical environment optimized to promote and accelerate protein folding. GroES binds to the apical surface of the GroEL ring, thereby capping the opening of the GroEL channel.</text>
</comment>
<comment type="subunit">
    <text evidence="1">Heptamer of 7 subunits arranged in a ring. Interacts with the chaperonin GroEL.</text>
</comment>
<comment type="subcellular location">
    <subcellularLocation>
        <location evidence="1">Cytoplasm</location>
    </subcellularLocation>
</comment>
<comment type="similarity">
    <text evidence="1">Belongs to the GroES chaperonin family.</text>
</comment>
<dbReference type="EMBL" id="CP000302">
    <property type="protein sequence ID" value="ABE53714.1"/>
    <property type="molecule type" value="Genomic_DNA"/>
</dbReference>
<dbReference type="RefSeq" id="WP_011494880.1">
    <property type="nucleotide sequence ID" value="NC_007954.1"/>
</dbReference>
<dbReference type="SMR" id="Q12S62"/>
<dbReference type="STRING" id="318161.Sden_0421"/>
<dbReference type="KEGG" id="sdn:Sden_0421"/>
<dbReference type="eggNOG" id="COG0234">
    <property type="taxonomic scope" value="Bacteria"/>
</dbReference>
<dbReference type="HOGENOM" id="CLU_132825_1_1_6"/>
<dbReference type="OrthoDB" id="9806791at2"/>
<dbReference type="Proteomes" id="UP000001982">
    <property type="component" value="Chromosome"/>
</dbReference>
<dbReference type="GO" id="GO:0005737">
    <property type="term" value="C:cytoplasm"/>
    <property type="evidence" value="ECO:0007669"/>
    <property type="project" value="UniProtKB-SubCell"/>
</dbReference>
<dbReference type="GO" id="GO:0005524">
    <property type="term" value="F:ATP binding"/>
    <property type="evidence" value="ECO:0007669"/>
    <property type="project" value="InterPro"/>
</dbReference>
<dbReference type="GO" id="GO:0046872">
    <property type="term" value="F:metal ion binding"/>
    <property type="evidence" value="ECO:0007669"/>
    <property type="project" value="TreeGrafter"/>
</dbReference>
<dbReference type="GO" id="GO:0044183">
    <property type="term" value="F:protein folding chaperone"/>
    <property type="evidence" value="ECO:0007669"/>
    <property type="project" value="InterPro"/>
</dbReference>
<dbReference type="GO" id="GO:0051087">
    <property type="term" value="F:protein-folding chaperone binding"/>
    <property type="evidence" value="ECO:0007669"/>
    <property type="project" value="TreeGrafter"/>
</dbReference>
<dbReference type="GO" id="GO:0051082">
    <property type="term" value="F:unfolded protein binding"/>
    <property type="evidence" value="ECO:0007669"/>
    <property type="project" value="TreeGrafter"/>
</dbReference>
<dbReference type="GO" id="GO:0051085">
    <property type="term" value="P:chaperone cofactor-dependent protein refolding"/>
    <property type="evidence" value="ECO:0007669"/>
    <property type="project" value="TreeGrafter"/>
</dbReference>
<dbReference type="CDD" id="cd00320">
    <property type="entry name" value="cpn10"/>
    <property type="match status" value="1"/>
</dbReference>
<dbReference type="FunFam" id="2.30.33.40:FF:000001">
    <property type="entry name" value="10 kDa chaperonin"/>
    <property type="match status" value="1"/>
</dbReference>
<dbReference type="Gene3D" id="2.30.33.40">
    <property type="entry name" value="GroES chaperonin"/>
    <property type="match status" value="1"/>
</dbReference>
<dbReference type="HAMAP" id="MF_00580">
    <property type="entry name" value="CH10"/>
    <property type="match status" value="1"/>
</dbReference>
<dbReference type="InterPro" id="IPR020818">
    <property type="entry name" value="Chaperonin_GroES"/>
</dbReference>
<dbReference type="InterPro" id="IPR037124">
    <property type="entry name" value="Chaperonin_GroES_sf"/>
</dbReference>
<dbReference type="InterPro" id="IPR018369">
    <property type="entry name" value="Chaprnonin_Cpn10_CS"/>
</dbReference>
<dbReference type="InterPro" id="IPR011032">
    <property type="entry name" value="GroES-like_sf"/>
</dbReference>
<dbReference type="NCBIfam" id="NF001526">
    <property type="entry name" value="PRK00364.1-1"/>
    <property type="match status" value="1"/>
</dbReference>
<dbReference type="NCBIfam" id="NF001527">
    <property type="entry name" value="PRK00364.1-2"/>
    <property type="match status" value="1"/>
</dbReference>
<dbReference type="NCBIfam" id="NF001531">
    <property type="entry name" value="PRK00364.2-2"/>
    <property type="match status" value="1"/>
</dbReference>
<dbReference type="PANTHER" id="PTHR10772">
    <property type="entry name" value="10 KDA HEAT SHOCK PROTEIN"/>
    <property type="match status" value="1"/>
</dbReference>
<dbReference type="PANTHER" id="PTHR10772:SF58">
    <property type="entry name" value="CO-CHAPERONIN GROES"/>
    <property type="match status" value="1"/>
</dbReference>
<dbReference type="Pfam" id="PF00166">
    <property type="entry name" value="Cpn10"/>
    <property type="match status" value="1"/>
</dbReference>
<dbReference type="PRINTS" id="PR00297">
    <property type="entry name" value="CHAPERONIN10"/>
</dbReference>
<dbReference type="SMART" id="SM00883">
    <property type="entry name" value="Cpn10"/>
    <property type="match status" value="1"/>
</dbReference>
<dbReference type="SUPFAM" id="SSF50129">
    <property type="entry name" value="GroES-like"/>
    <property type="match status" value="1"/>
</dbReference>
<dbReference type="PROSITE" id="PS00681">
    <property type="entry name" value="CHAPERONINS_CPN10"/>
    <property type="match status" value="1"/>
</dbReference>
<evidence type="ECO:0000255" key="1">
    <source>
        <dbReference type="HAMAP-Rule" id="MF_00580"/>
    </source>
</evidence>
<accession>Q12S62</accession>
<keyword id="KW-0143">Chaperone</keyword>
<keyword id="KW-0963">Cytoplasm</keyword>
<keyword id="KW-1185">Reference proteome</keyword>
<feature type="chain" id="PRO_1000025361" description="Co-chaperonin GroES">
    <location>
        <begin position="1"/>
        <end position="96"/>
    </location>
</feature>
<protein>
    <recommendedName>
        <fullName evidence="1">Co-chaperonin GroES</fullName>
    </recommendedName>
    <alternativeName>
        <fullName evidence="1">10 kDa chaperonin</fullName>
    </alternativeName>
    <alternativeName>
        <fullName evidence="1">Chaperonin-10</fullName>
        <shortName evidence="1">Cpn10</shortName>
    </alternativeName>
</protein>
<organism>
    <name type="scientific">Shewanella denitrificans (strain OS217 / ATCC BAA-1090 / DSM 15013)</name>
    <dbReference type="NCBI Taxonomy" id="318161"/>
    <lineage>
        <taxon>Bacteria</taxon>
        <taxon>Pseudomonadati</taxon>
        <taxon>Pseudomonadota</taxon>
        <taxon>Gammaproteobacteria</taxon>
        <taxon>Alteromonadales</taxon>
        <taxon>Shewanellaceae</taxon>
        <taxon>Shewanella</taxon>
    </lineage>
</organism>